<evidence type="ECO:0000255" key="1">
    <source>
        <dbReference type="HAMAP-Rule" id="MF_00823"/>
    </source>
</evidence>
<evidence type="ECO:0000255" key="2">
    <source>
        <dbReference type="PROSITE-ProRule" id="PRU01137"/>
    </source>
</evidence>
<evidence type="ECO:0007829" key="3">
    <source>
        <dbReference type="PDB" id="2F9I"/>
    </source>
</evidence>
<name>ACCA_STAA3</name>
<keyword id="KW-0002">3D-structure</keyword>
<keyword id="KW-0067">ATP-binding</keyword>
<keyword id="KW-0963">Cytoplasm</keyword>
<keyword id="KW-0275">Fatty acid biosynthesis</keyword>
<keyword id="KW-0276">Fatty acid metabolism</keyword>
<keyword id="KW-0444">Lipid biosynthesis</keyword>
<keyword id="KW-0443">Lipid metabolism</keyword>
<keyword id="KW-0547">Nucleotide-binding</keyword>
<keyword id="KW-0808">Transferase</keyword>
<protein>
    <recommendedName>
        <fullName evidence="1">Acetyl-coenzyme A carboxylase carboxyl transferase subunit alpha</fullName>
        <shortName evidence="1">ACCase subunit alpha</shortName>
        <shortName evidence="1">Acetyl-CoA carboxylase carboxyltransferase subunit alpha</shortName>
        <ecNumber evidence="1">2.1.3.15</ecNumber>
    </recommendedName>
</protein>
<reference key="1">
    <citation type="journal article" date="2006" name="Lancet">
        <title>Complete genome sequence of USA300, an epidemic clone of community-acquired meticillin-resistant Staphylococcus aureus.</title>
        <authorList>
            <person name="Diep B.A."/>
            <person name="Gill S.R."/>
            <person name="Chang R.F."/>
            <person name="Phan T.H."/>
            <person name="Chen J.H."/>
            <person name="Davidson M.G."/>
            <person name="Lin F."/>
            <person name="Lin J."/>
            <person name="Carleton H.A."/>
            <person name="Mongodin E.F."/>
            <person name="Sensabaugh G.F."/>
            <person name="Perdreau-Remington F."/>
        </authorList>
    </citation>
    <scope>NUCLEOTIDE SEQUENCE [LARGE SCALE GENOMIC DNA]</scope>
    <source>
        <strain>USA300</strain>
    </source>
</reference>
<proteinExistence type="evidence at protein level"/>
<accession>Q2FG38</accession>
<organism>
    <name type="scientific">Staphylococcus aureus (strain USA300)</name>
    <dbReference type="NCBI Taxonomy" id="367830"/>
    <lineage>
        <taxon>Bacteria</taxon>
        <taxon>Bacillati</taxon>
        <taxon>Bacillota</taxon>
        <taxon>Bacilli</taxon>
        <taxon>Bacillales</taxon>
        <taxon>Staphylococcaceae</taxon>
        <taxon>Staphylococcus</taxon>
    </lineage>
</organism>
<feature type="chain" id="PRO_1000062678" description="Acetyl-coenzyme A carboxylase carboxyl transferase subunit alpha">
    <location>
        <begin position="1"/>
        <end position="314"/>
    </location>
</feature>
<feature type="domain" description="CoA carboxyltransferase C-terminal" evidence="2">
    <location>
        <begin position="32"/>
        <end position="289"/>
    </location>
</feature>
<feature type="helix" evidence="3">
    <location>
        <begin position="3"/>
        <end position="5"/>
    </location>
</feature>
<feature type="helix" evidence="3">
    <location>
        <begin position="6"/>
        <end position="16"/>
    </location>
</feature>
<feature type="helix" evidence="3">
    <location>
        <begin position="33"/>
        <end position="49"/>
    </location>
</feature>
<feature type="helix" evidence="3">
    <location>
        <begin position="53"/>
        <end position="60"/>
    </location>
</feature>
<feature type="helix" evidence="3">
    <location>
        <begin position="68"/>
        <end position="75"/>
    </location>
</feature>
<feature type="strand" evidence="3">
    <location>
        <begin position="77"/>
        <end position="81"/>
    </location>
</feature>
<feature type="strand" evidence="3">
    <location>
        <begin position="86"/>
        <end position="88"/>
    </location>
</feature>
<feature type="strand" evidence="3">
    <location>
        <begin position="94"/>
        <end position="101"/>
    </location>
</feature>
<feature type="strand" evidence="3">
    <location>
        <begin position="104"/>
        <end position="111"/>
    </location>
</feature>
<feature type="helix" evidence="3">
    <location>
        <begin position="117"/>
        <end position="122"/>
    </location>
</feature>
<feature type="helix" evidence="3">
    <location>
        <begin position="124"/>
        <end position="126"/>
    </location>
</feature>
<feature type="helix" evidence="3">
    <location>
        <begin position="130"/>
        <end position="145"/>
    </location>
</feature>
<feature type="strand" evidence="3">
    <location>
        <begin position="150"/>
        <end position="157"/>
    </location>
</feature>
<feature type="helix" evidence="3">
    <location>
        <begin position="163"/>
        <end position="167"/>
    </location>
</feature>
<feature type="helix" evidence="3">
    <location>
        <begin position="170"/>
        <end position="182"/>
    </location>
</feature>
<feature type="strand" evidence="3">
    <location>
        <begin position="188"/>
        <end position="197"/>
    </location>
</feature>
<feature type="helix" evidence="3">
    <location>
        <begin position="198"/>
        <end position="202"/>
    </location>
</feature>
<feature type="strand" evidence="3">
    <location>
        <begin position="208"/>
        <end position="213"/>
    </location>
</feature>
<feature type="strand" evidence="3">
    <location>
        <begin position="219"/>
        <end position="221"/>
    </location>
</feature>
<feature type="helix" evidence="3">
    <location>
        <begin position="223"/>
        <end position="230"/>
    </location>
</feature>
<feature type="helix" evidence="3">
    <location>
        <begin position="234"/>
        <end position="236"/>
    </location>
</feature>
<feature type="helix" evidence="3">
    <location>
        <begin position="237"/>
        <end position="244"/>
    </location>
</feature>
<feature type="helix" evidence="3">
    <location>
        <begin position="248"/>
        <end position="253"/>
    </location>
</feature>
<feature type="strand" evidence="3">
    <location>
        <begin position="256"/>
        <end position="261"/>
    </location>
</feature>
<feature type="helix" evidence="3">
    <location>
        <begin position="268"/>
        <end position="270"/>
    </location>
</feature>
<feature type="helix" evidence="3">
    <location>
        <begin position="272"/>
        <end position="288"/>
    </location>
</feature>
<feature type="turn" evidence="3">
    <location>
        <begin position="289"/>
        <end position="292"/>
    </location>
</feature>
<feature type="helix" evidence="3">
    <location>
        <begin position="295"/>
        <end position="307"/>
    </location>
</feature>
<gene>
    <name evidence="1" type="primary">accA</name>
    <name type="ordered locus">SAUSA300_1646</name>
</gene>
<comment type="function">
    <text evidence="1">Component of the acetyl coenzyme A carboxylase (ACC) complex. First, biotin carboxylase catalyzes the carboxylation of biotin on its carrier protein (BCCP) and then the CO(2) group is transferred by the carboxyltransferase to acetyl-CoA to form malonyl-CoA.</text>
</comment>
<comment type="catalytic activity">
    <reaction evidence="1">
        <text>N(6)-carboxybiotinyl-L-lysyl-[protein] + acetyl-CoA = N(6)-biotinyl-L-lysyl-[protein] + malonyl-CoA</text>
        <dbReference type="Rhea" id="RHEA:54728"/>
        <dbReference type="Rhea" id="RHEA-COMP:10505"/>
        <dbReference type="Rhea" id="RHEA-COMP:10506"/>
        <dbReference type="ChEBI" id="CHEBI:57288"/>
        <dbReference type="ChEBI" id="CHEBI:57384"/>
        <dbReference type="ChEBI" id="CHEBI:83144"/>
        <dbReference type="ChEBI" id="CHEBI:83145"/>
        <dbReference type="EC" id="2.1.3.15"/>
    </reaction>
</comment>
<comment type="pathway">
    <text evidence="1">Lipid metabolism; malonyl-CoA biosynthesis; malonyl-CoA from acetyl-CoA: step 1/1.</text>
</comment>
<comment type="subunit">
    <text evidence="1">Acetyl-CoA carboxylase is a heterohexamer composed of biotin carboxyl carrier protein (AccB), biotin carboxylase (AccC) and two subunits each of ACCase subunit alpha (AccA) and ACCase subunit beta (AccD).</text>
</comment>
<comment type="subcellular location">
    <subcellularLocation>
        <location evidence="1">Cytoplasm</location>
    </subcellularLocation>
</comment>
<comment type="similarity">
    <text evidence="1">Belongs to the AccA family.</text>
</comment>
<sequence>MLDFEKPLFEIRNKIESLKESQDKNDVDLQEEIDMLEASLERETKKIYTNLKPWDRVQIARLQERPTTLDYIPYIFDSFMELHGDRNFRDDPAMIGGIGFLNGRAVTVIGQQRGKDTKDNIYRNFGMAHPEGYRKALRLMKQAEKFNRPIFTFIDTKGAYPGKAAEERGQSESIATNLIEMASLKVPVIAIVIGEGGSGGALGIGIANKVLMLENSTYSVISPEGAAALLWKDSNLAKIAAETMKITAHDIKQLGIIDDVISEPLGGAHKDIEQQALAIKSAFVAQLDSLESLSRDEIANDRFEKFRNIGSYIE</sequence>
<dbReference type="EC" id="2.1.3.15" evidence="1"/>
<dbReference type="EMBL" id="CP000255">
    <property type="protein sequence ID" value="ABD21607.1"/>
    <property type="molecule type" value="Genomic_DNA"/>
</dbReference>
<dbReference type="RefSeq" id="WP_000883645.1">
    <property type="nucleotide sequence ID" value="NZ_CP027476.1"/>
</dbReference>
<dbReference type="PDB" id="2F9I">
    <property type="method" value="X-ray"/>
    <property type="resolution" value="1.98 A"/>
    <property type="chains" value="A/C=1-314"/>
</dbReference>
<dbReference type="PDBsum" id="2F9I"/>
<dbReference type="SMR" id="Q2FG38"/>
<dbReference type="KEGG" id="saa:SAUSA300_1646"/>
<dbReference type="HOGENOM" id="CLU_015486_0_2_9"/>
<dbReference type="OMA" id="RNFGMAN"/>
<dbReference type="UniPathway" id="UPA00655">
    <property type="reaction ID" value="UER00711"/>
</dbReference>
<dbReference type="EvolutionaryTrace" id="Q2FG38"/>
<dbReference type="Proteomes" id="UP000001939">
    <property type="component" value="Chromosome"/>
</dbReference>
<dbReference type="GO" id="GO:0009317">
    <property type="term" value="C:acetyl-CoA carboxylase complex"/>
    <property type="evidence" value="ECO:0007669"/>
    <property type="project" value="InterPro"/>
</dbReference>
<dbReference type="GO" id="GO:0003989">
    <property type="term" value="F:acetyl-CoA carboxylase activity"/>
    <property type="evidence" value="ECO:0007669"/>
    <property type="project" value="InterPro"/>
</dbReference>
<dbReference type="GO" id="GO:0005524">
    <property type="term" value="F:ATP binding"/>
    <property type="evidence" value="ECO:0007669"/>
    <property type="project" value="UniProtKB-KW"/>
</dbReference>
<dbReference type="GO" id="GO:0016743">
    <property type="term" value="F:carboxyl- or carbamoyltransferase activity"/>
    <property type="evidence" value="ECO:0007669"/>
    <property type="project" value="UniProtKB-UniRule"/>
</dbReference>
<dbReference type="GO" id="GO:0006633">
    <property type="term" value="P:fatty acid biosynthetic process"/>
    <property type="evidence" value="ECO:0007669"/>
    <property type="project" value="UniProtKB-KW"/>
</dbReference>
<dbReference type="GO" id="GO:2001295">
    <property type="term" value="P:malonyl-CoA biosynthetic process"/>
    <property type="evidence" value="ECO:0007669"/>
    <property type="project" value="UniProtKB-UniRule"/>
</dbReference>
<dbReference type="Gene3D" id="3.90.226.10">
    <property type="entry name" value="2-enoyl-CoA Hydratase, Chain A, domain 1"/>
    <property type="match status" value="1"/>
</dbReference>
<dbReference type="HAMAP" id="MF_00823">
    <property type="entry name" value="AcetylCoA_CT_alpha"/>
    <property type="match status" value="1"/>
</dbReference>
<dbReference type="InterPro" id="IPR001095">
    <property type="entry name" value="Acetyl_CoA_COase_a_su"/>
</dbReference>
<dbReference type="InterPro" id="IPR029045">
    <property type="entry name" value="ClpP/crotonase-like_dom_sf"/>
</dbReference>
<dbReference type="InterPro" id="IPR011763">
    <property type="entry name" value="COA_CT_C"/>
</dbReference>
<dbReference type="NCBIfam" id="TIGR00513">
    <property type="entry name" value="accA"/>
    <property type="match status" value="1"/>
</dbReference>
<dbReference type="NCBIfam" id="NF041504">
    <property type="entry name" value="AccA_sub"/>
    <property type="match status" value="1"/>
</dbReference>
<dbReference type="NCBIfam" id="NF004344">
    <property type="entry name" value="PRK05724.1"/>
    <property type="match status" value="1"/>
</dbReference>
<dbReference type="PANTHER" id="PTHR42853">
    <property type="entry name" value="ACETYL-COENZYME A CARBOXYLASE CARBOXYL TRANSFERASE SUBUNIT ALPHA"/>
    <property type="match status" value="1"/>
</dbReference>
<dbReference type="PANTHER" id="PTHR42853:SF3">
    <property type="entry name" value="ACETYL-COENZYME A CARBOXYLASE CARBOXYL TRANSFERASE SUBUNIT ALPHA, CHLOROPLASTIC"/>
    <property type="match status" value="1"/>
</dbReference>
<dbReference type="Pfam" id="PF03255">
    <property type="entry name" value="ACCA"/>
    <property type="match status" value="1"/>
</dbReference>
<dbReference type="PRINTS" id="PR01069">
    <property type="entry name" value="ACCCTRFRASEA"/>
</dbReference>
<dbReference type="SUPFAM" id="SSF52096">
    <property type="entry name" value="ClpP/crotonase"/>
    <property type="match status" value="1"/>
</dbReference>
<dbReference type="PROSITE" id="PS50989">
    <property type="entry name" value="COA_CT_CTER"/>
    <property type="match status" value="1"/>
</dbReference>